<name>SYP_LEPBJ</name>
<dbReference type="EC" id="6.1.1.15" evidence="1"/>
<dbReference type="EMBL" id="CP000350">
    <property type="protein sequence ID" value="ABJ75556.1"/>
    <property type="molecule type" value="Genomic_DNA"/>
</dbReference>
<dbReference type="RefSeq" id="WP_011671653.1">
    <property type="nucleotide sequence ID" value="NC_008510.1"/>
</dbReference>
<dbReference type="SMR" id="Q04U64"/>
<dbReference type="KEGG" id="lbj:LBJ_0912"/>
<dbReference type="HOGENOM" id="CLU_016739_0_0_12"/>
<dbReference type="Proteomes" id="UP000000656">
    <property type="component" value="Chromosome 1"/>
</dbReference>
<dbReference type="GO" id="GO:0005829">
    <property type="term" value="C:cytosol"/>
    <property type="evidence" value="ECO:0007669"/>
    <property type="project" value="TreeGrafter"/>
</dbReference>
<dbReference type="GO" id="GO:0002161">
    <property type="term" value="F:aminoacyl-tRNA deacylase activity"/>
    <property type="evidence" value="ECO:0007669"/>
    <property type="project" value="InterPro"/>
</dbReference>
<dbReference type="GO" id="GO:0005524">
    <property type="term" value="F:ATP binding"/>
    <property type="evidence" value="ECO:0007669"/>
    <property type="project" value="UniProtKB-UniRule"/>
</dbReference>
<dbReference type="GO" id="GO:0004827">
    <property type="term" value="F:proline-tRNA ligase activity"/>
    <property type="evidence" value="ECO:0007669"/>
    <property type="project" value="UniProtKB-UniRule"/>
</dbReference>
<dbReference type="GO" id="GO:0006433">
    <property type="term" value="P:prolyl-tRNA aminoacylation"/>
    <property type="evidence" value="ECO:0007669"/>
    <property type="project" value="UniProtKB-UniRule"/>
</dbReference>
<dbReference type="CDD" id="cd04334">
    <property type="entry name" value="ProRS-INS"/>
    <property type="match status" value="1"/>
</dbReference>
<dbReference type="CDD" id="cd00861">
    <property type="entry name" value="ProRS_anticodon_short"/>
    <property type="match status" value="1"/>
</dbReference>
<dbReference type="CDD" id="cd00779">
    <property type="entry name" value="ProRS_core_prok"/>
    <property type="match status" value="1"/>
</dbReference>
<dbReference type="FunFam" id="3.30.930.10:FF:000065">
    <property type="entry name" value="Proline--tRNA ligase"/>
    <property type="match status" value="1"/>
</dbReference>
<dbReference type="FunFam" id="3.30.930.10:FF:000150">
    <property type="entry name" value="Proline--tRNA ligase"/>
    <property type="match status" value="1"/>
</dbReference>
<dbReference type="Gene3D" id="3.40.50.800">
    <property type="entry name" value="Anticodon-binding domain"/>
    <property type="match status" value="1"/>
</dbReference>
<dbReference type="Gene3D" id="3.30.930.10">
    <property type="entry name" value="Bira Bifunctional Protein, Domain 2"/>
    <property type="match status" value="2"/>
</dbReference>
<dbReference type="HAMAP" id="MF_01569">
    <property type="entry name" value="Pro_tRNA_synth_type1"/>
    <property type="match status" value="1"/>
</dbReference>
<dbReference type="InterPro" id="IPR002314">
    <property type="entry name" value="aa-tRNA-synt_IIb"/>
</dbReference>
<dbReference type="InterPro" id="IPR006195">
    <property type="entry name" value="aa-tRNA-synth_II"/>
</dbReference>
<dbReference type="InterPro" id="IPR045864">
    <property type="entry name" value="aa-tRNA-synth_II/BPL/LPL"/>
</dbReference>
<dbReference type="InterPro" id="IPR004154">
    <property type="entry name" value="Anticodon-bd"/>
</dbReference>
<dbReference type="InterPro" id="IPR036621">
    <property type="entry name" value="Anticodon-bd_dom_sf"/>
</dbReference>
<dbReference type="InterPro" id="IPR002316">
    <property type="entry name" value="Pro-tRNA-ligase_IIa"/>
</dbReference>
<dbReference type="InterPro" id="IPR004500">
    <property type="entry name" value="Pro-tRNA-synth_IIa_bac-type"/>
</dbReference>
<dbReference type="InterPro" id="IPR023717">
    <property type="entry name" value="Pro-tRNA-Synthase_IIa_type1"/>
</dbReference>
<dbReference type="InterPro" id="IPR050062">
    <property type="entry name" value="Pro-tRNA_synthetase"/>
</dbReference>
<dbReference type="InterPro" id="IPR044140">
    <property type="entry name" value="ProRS_anticodon_short"/>
</dbReference>
<dbReference type="InterPro" id="IPR033730">
    <property type="entry name" value="ProRS_core_prok"/>
</dbReference>
<dbReference type="InterPro" id="IPR036754">
    <property type="entry name" value="YbaK/aa-tRNA-synt-asso_dom_sf"/>
</dbReference>
<dbReference type="InterPro" id="IPR007214">
    <property type="entry name" value="YbaK/aa-tRNA-synth-assoc-dom"/>
</dbReference>
<dbReference type="NCBIfam" id="NF006625">
    <property type="entry name" value="PRK09194.1"/>
    <property type="match status" value="1"/>
</dbReference>
<dbReference type="NCBIfam" id="TIGR00409">
    <property type="entry name" value="proS_fam_II"/>
    <property type="match status" value="1"/>
</dbReference>
<dbReference type="PANTHER" id="PTHR42753">
    <property type="entry name" value="MITOCHONDRIAL RIBOSOME PROTEIN L39/PROLYL-TRNA LIGASE FAMILY MEMBER"/>
    <property type="match status" value="1"/>
</dbReference>
<dbReference type="PANTHER" id="PTHR42753:SF2">
    <property type="entry name" value="PROLINE--TRNA LIGASE"/>
    <property type="match status" value="1"/>
</dbReference>
<dbReference type="Pfam" id="PF03129">
    <property type="entry name" value="HGTP_anticodon"/>
    <property type="match status" value="1"/>
</dbReference>
<dbReference type="Pfam" id="PF00587">
    <property type="entry name" value="tRNA-synt_2b"/>
    <property type="match status" value="1"/>
</dbReference>
<dbReference type="Pfam" id="PF04073">
    <property type="entry name" value="tRNA_edit"/>
    <property type="match status" value="1"/>
</dbReference>
<dbReference type="PRINTS" id="PR01046">
    <property type="entry name" value="TRNASYNTHPRO"/>
</dbReference>
<dbReference type="SUPFAM" id="SSF52954">
    <property type="entry name" value="Class II aaRS ABD-related"/>
    <property type="match status" value="1"/>
</dbReference>
<dbReference type="SUPFAM" id="SSF55681">
    <property type="entry name" value="Class II aaRS and biotin synthetases"/>
    <property type="match status" value="1"/>
</dbReference>
<dbReference type="SUPFAM" id="SSF55826">
    <property type="entry name" value="YbaK/ProRS associated domain"/>
    <property type="match status" value="1"/>
</dbReference>
<dbReference type="PROSITE" id="PS50862">
    <property type="entry name" value="AA_TRNA_LIGASE_II"/>
    <property type="match status" value="1"/>
</dbReference>
<proteinExistence type="inferred from homology"/>
<protein>
    <recommendedName>
        <fullName evidence="1">Proline--tRNA ligase</fullName>
        <ecNumber evidence="1">6.1.1.15</ecNumber>
    </recommendedName>
    <alternativeName>
        <fullName evidence="1">Prolyl-tRNA synthetase</fullName>
        <shortName evidence="1">ProRS</shortName>
    </alternativeName>
</protein>
<organism>
    <name type="scientific">Leptospira borgpetersenii serovar Hardjo-bovis (strain JB197)</name>
    <dbReference type="NCBI Taxonomy" id="355277"/>
    <lineage>
        <taxon>Bacteria</taxon>
        <taxon>Pseudomonadati</taxon>
        <taxon>Spirochaetota</taxon>
        <taxon>Spirochaetia</taxon>
        <taxon>Leptospirales</taxon>
        <taxon>Leptospiraceae</taxon>
        <taxon>Leptospira</taxon>
    </lineage>
</organism>
<sequence>MKASKYILPTEKENPSDAVVASHRLMIRAGLARKSSAGLYFYLPLGLKILQKIKQIIREEMNKTGALEFDLPILTPSDFWEQSGRWTAMGKEMFRIKDRHDLSYALGPTHEESFSFLLKPLLKSYKDLPLNVYQIQTKFRDEIRPRFGVIRSREFIMKDAYSFHIDDVSLDETYQSMRAAYRKIFDRCGLKTIPVQADSGSMGGSASEEFMVVSPIGEETLLLCNSCGYSSNSEKTPLVLKKENVSSASVEKKEISTPGKKTIVEVSAFLEIPESTTIKAVTLKSEKKKILVYLRGDLELNLHKLHSLLRIVDSEPMTDAEIRELGLVPGFIAPVAPNDKVKVLYDRSLQKDFPYVVASNKEDFHTQGFVLEKEVSGLPEFADVALAREGDLCPNCNAPLKAEKGIEVGHIFKLGEKYTKAFGIQVLDQNGKARTLTMGCYGIGVNRTMATVIEQRNDEKGIFWPISIAPFEVTLVSITKGEEQYSKAEEFYNVLKNENLEVFWDDRDVGPGFKLKDSELIGFPIRVTIGKKFFENGEISIYNRKADKEESFVFAGFENLIARVESLRQELFAELE</sequence>
<reference key="1">
    <citation type="journal article" date="2006" name="Proc. Natl. Acad. Sci. U.S.A.">
        <title>Genome reduction in Leptospira borgpetersenii reflects limited transmission potential.</title>
        <authorList>
            <person name="Bulach D.M."/>
            <person name="Zuerner R.L."/>
            <person name="Wilson P."/>
            <person name="Seemann T."/>
            <person name="McGrath A."/>
            <person name="Cullen P.A."/>
            <person name="Davis J."/>
            <person name="Johnson M."/>
            <person name="Kuczek E."/>
            <person name="Alt D.P."/>
            <person name="Peterson-Burch B."/>
            <person name="Coppel R.L."/>
            <person name="Rood J.I."/>
            <person name="Davies J.K."/>
            <person name="Adler B."/>
        </authorList>
    </citation>
    <scope>NUCLEOTIDE SEQUENCE [LARGE SCALE GENOMIC DNA]</scope>
    <source>
        <strain>JB197</strain>
    </source>
</reference>
<keyword id="KW-0030">Aminoacyl-tRNA synthetase</keyword>
<keyword id="KW-0067">ATP-binding</keyword>
<keyword id="KW-0963">Cytoplasm</keyword>
<keyword id="KW-0436">Ligase</keyword>
<keyword id="KW-0547">Nucleotide-binding</keyword>
<keyword id="KW-0648">Protein biosynthesis</keyword>
<accession>Q04U64</accession>
<comment type="function">
    <text evidence="1">Catalyzes the attachment of proline to tRNA(Pro) in a two-step reaction: proline is first activated by ATP to form Pro-AMP and then transferred to the acceptor end of tRNA(Pro). As ProRS can inadvertently accommodate and process non-cognate amino acids such as alanine and cysteine, to avoid such errors it has two additional distinct editing activities against alanine. One activity is designated as 'pretransfer' editing and involves the tRNA(Pro)-independent hydrolysis of activated Ala-AMP. The other activity is designated 'posttransfer' editing and involves deacylation of mischarged Ala-tRNA(Pro). The misacylated Cys-tRNA(Pro) is not edited by ProRS.</text>
</comment>
<comment type="catalytic activity">
    <reaction evidence="1">
        <text>tRNA(Pro) + L-proline + ATP = L-prolyl-tRNA(Pro) + AMP + diphosphate</text>
        <dbReference type="Rhea" id="RHEA:14305"/>
        <dbReference type="Rhea" id="RHEA-COMP:9700"/>
        <dbReference type="Rhea" id="RHEA-COMP:9702"/>
        <dbReference type="ChEBI" id="CHEBI:30616"/>
        <dbReference type="ChEBI" id="CHEBI:33019"/>
        <dbReference type="ChEBI" id="CHEBI:60039"/>
        <dbReference type="ChEBI" id="CHEBI:78442"/>
        <dbReference type="ChEBI" id="CHEBI:78532"/>
        <dbReference type="ChEBI" id="CHEBI:456215"/>
        <dbReference type="EC" id="6.1.1.15"/>
    </reaction>
</comment>
<comment type="subunit">
    <text evidence="1">Homodimer.</text>
</comment>
<comment type="subcellular location">
    <subcellularLocation>
        <location evidence="1">Cytoplasm</location>
    </subcellularLocation>
</comment>
<comment type="domain">
    <text evidence="1">Consists of three domains: the N-terminal catalytic domain, the editing domain and the C-terminal anticodon-binding domain.</text>
</comment>
<comment type="similarity">
    <text evidence="1">Belongs to the class-II aminoacyl-tRNA synthetase family. ProS type 1 subfamily.</text>
</comment>
<evidence type="ECO:0000255" key="1">
    <source>
        <dbReference type="HAMAP-Rule" id="MF_01569"/>
    </source>
</evidence>
<gene>
    <name evidence="1" type="primary">proS</name>
    <name type="ordered locus">LBJ_0912</name>
</gene>
<feature type="chain" id="PRO_0000288341" description="Proline--tRNA ligase">
    <location>
        <begin position="1"/>
        <end position="576"/>
    </location>
</feature>